<dbReference type="EMBL" id="AK093221">
    <property type="protein sequence ID" value="BAC04099.1"/>
    <property type="molecule type" value="mRNA"/>
</dbReference>
<dbReference type="EMBL" id="AK303656">
    <property type="protein sequence ID" value="BAG64657.1"/>
    <property type="molecule type" value="mRNA"/>
</dbReference>
<dbReference type="EMBL" id="AK315821">
    <property type="protein sequence ID" value="BAF98712.1"/>
    <property type="molecule type" value="mRNA"/>
</dbReference>
<dbReference type="EMBL" id="AC007564">
    <property type="status" value="NOT_ANNOTATED_CDS"/>
    <property type="molecule type" value="Genomic_DNA"/>
</dbReference>
<dbReference type="EMBL" id="AC013417">
    <property type="status" value="NOT_ANNOTATED_CDS"/>
    <property type="molecule type" value="Genomic_DNA"/>
</dbReference>
<dbReference type="EMBL" id="CH471054">
    <property type="protein sequence ID" value="EAW97577.1"/>
    <property type="molecule type" value="Genomic_DNA"/>
</dbReference>
<dbReference type="EMBL" id="CH471054">
    <property type="protein sequence ID" value="EAW97579.1"/>
    <property type="molecule type" value="Genomic_DNA"/>
</dbReference>
<dbReference type="EMBL" id="CH471054">
    <property type="protein sequence ID" value="EAW97580.1"/>
    <property type="molecule type" value="Genomic_DNA"/>
</dbReference>
<dbReference type="EMBL" id="BC027605">
    <property type="protein sequence ID" value="AAH27605.1"/>
    <property type="status" value="ALT_INIT"/>
    <property type="molecule type" value="mRNA"/>
</dbReference>
<dbReference type="CCDS" id="CCDS44955.1">
    <molecule id="Q8NHV4-3"/>
</dbReference>
<dbReference type="CCDS" id="CCDS44956.1">
    <molecule id="Q8NHV4-2"/>
</dbReference>
<dbReference type="CCDS" id="CCDS9063.1">
    <molecule id="Q8NHV4-1"/>
</dbReference>
<dbReference type="RefSeq" id="NP_001128647.1">
    <molecule id="Q8NHV4-3"/>
    <property type="nucleotide sequence ID" value="NM_001135175.2"/>
</dbReference>
<dbReference type="RefSeq" id="NP_001128648.1">
    <molecule id="Q8NHV4-1"/>
    <property type="nucleotide sequence ID" value="NM_001135176.2"/>
</dbReference>
<dbReference type="RefSeq" id="NP_001128649.1">
    <molecule id="Q8NHV4-2"/>
    <property type="nucleotide sequence ID" value="NM_001135177.2"/>
</dbReference>
<dbReference type="RefSeq" id="NP_690869.1">
    <molecule id="Q8NHV4-1"/>
    <property type="nucleotide sequence ID" value="NM_152905.4"/>
</dbReference>
<dbReference type="RefSeq" id="XP_005268701.1">
    <molecule id="Q8NHV4-3"/>
    <property type="nucleotide sequence ID" value="XM_005268644.3"/>
</dbReference>
<dbReference type="RefSeq" id="XP_006719300.1">
    <molecule id="Q8NHV4-2"/>
    <property type="nucleotide sequence ID" value="XM_006719237.5"/>
</dbReference>
<dbReference type="RefSeq" id="XP_011536205.1">
    <molecule id="Q8NHV4-2"/>
    <property type="nucleotide sequence ID" value="XM_011537903.4"/>
</dbReference>
<dbReference type="RefSeq" id="XP_054227056.1">
    <molecule id="Q8NHV4-3"/>
    <property type="nucleotide sequence ID" value="XM_054371081.1"/>
</dbReference>
<dbReference type="RefSeq" id="XP_054227057.1">
    <molecule id="Q8NHV4-2"/>
    <property type="nucleotide sequence ID" value="XM_054371082.1"/>
</dbReference>
<dbReference type="RefSeq" id="XP_054227058.1">
    <molecule id="Q8NHV4-2"/>
    <property type="nucleotide sequence ID" value="XM_054371083.1"/>
</dbReference>
<dbReference type="SMR" id="Q8NHV4"/>
<dbReference type="BioGRID" id="125728">
    <property type="interactions" value="244"/>
</dbReference>
<dbReference type="DIP" id="DIP-48838N"/>
<dbReference type="FunCoup" id="Q8NHV4">
    <property type="interactions" value="2668"/>
</dbReference>
<dbReference type="IntAct" id="Q8NHV4">
    <property type="interactions" value="142"/>
</dbReference>
<dbReference type="MINT" id="Q8NHV4"/>
<dbReference type="STRING" id="9606.ENSP00000451211"/>
<dbReference type="GlyCosmos" id="Q8NHV4">
    <property type="glycosylation" value="1 site, 1 glycan"/>
</dbReference>
<dbReference type="GlyGen" id="Q8NHV4">
    <property type="glycosylation" value="5 sites, 1 N-linked glycan (1 site), 1 O-linked glycan (4 sites)"/>
</dbReference>
<dbReference type="iPTMnet" id="Q8NHV4"/>
<dbReference type="PhosphoSitePlus" id="Q8NHV4"/>
<dbReference type="BioMuta" id="NEDD1"/>
<dbReference type="DMDM" id="74762597"/>
<dbReference type="jPOST" id="Q8NHV4"/>
<dbReference type="MassIVE" id="Q8NHV4"/>
<dbReference type="PaxDb" id="9606-ENSP00000451211"/>
<dbReference type="PeptideAtlas" id="Q8NHV4"/>
<dbReference type="ProteomicsDB" id="32921"/>
<dbReference type="ProteomicsDB" id="73763">
    <molecule id="Q8NHV4-1"/>
</dbReference>
<dbReference type="ProteomicsDB" id="73764">
    <molecule id="Q8NHV4-2"/>
</dbReference>
<dbReference type="Pumba" id="Q8NHV4"/>
<dbReference type="Antibodypedia" id="30194">
    <property type="antibodies" value="222 antibodies from 32 providers"/>
</dbReference>
<dbReference type="DNASU" id="121441"/>
<dbReference type="Ensembl" id="ENST00000266742.9">
    <molecule id="Q8NHV4-1"/>
    <property type="protein sequence ID" value="ENSP00000266742.5"/>
    <property type="gene ID" value="ENSG00000139350.13"/>
</dbReference>
<dbReference type="Ensembl" id="ENST00000411739.6">
    <molecule id="Q8NHV4-2"/>
    <property type="protein sequence ID" value="ENSP00000411307.2"/>
    <property type="gene ID" value="ENSG00000139350.13"/>
</dbReference>
<dbReference type="Ensembl" id="ENST00000429527.6">
    <molecule id="Q8NHV4-1"/>
    <property type="protein sequence ID" value="ENSP00000404978.2"/>
    <property type="gene ID" value="ENSG00000139350.13"/>
</dbReference>
<dbReference type="Ensembl" id="ENST00000457368.2">
    <molecule id="Q8NHV4-2"/>
    <property type="protein sequence ID" value="ENSP00000407964.2"/>
    <property type="gene ID" value="ENSG00000139350.13"/>
</dbReference>
<dbReference type="Ensembl" id="ENST00000557644.5">
    <molecule id="Q8NHV4-3"/>
    <property type="protein sequence ID" value="ENSP00000451211.1"/>
    <property type="gene ID" value="ENSG00000139350.13"/>
</dbReference>
<dbReference type="GeneID" id="121441"/>
<dbReference type="KEGG" id="hsa:121441"/>
<dbReference type="MANE-Select" id="ENST00000266742.9">
    <property type="protein sequence ID" value="ENSP00000266742.5"/>
    <property type="RefSeq nucleotide sequence ID" value="NM_152905.4"/>
    <property type="RefSeq protein sequence ID" value="NP_690869.1"/>
</dbReference>
<dbReference type="UCSC" id="uc001teu.5">
    <molecule id="Q8NHV4-1"/>
    <property type="organism name" value="human"/>
</dbReference>
<dbReference type="AGR" id="HGNC:7723"/>
<dbReference type="CTD" id="121441"/>
<dbReference type="DisGeNET" id="121441"/>
<dbReference type="GeneCards" id="NEDD1"/>
<dbReference type="HGNC" id="HGNC:7723">
    <property type="gene designation" value="NEDD1"/>
</dbReference>
<dbReference type="HPA" id="ENSG00000139350">
    <property type="expression patterns" value="Low tissue specificity"/>
</dbReference>
<dbReference type="MIM" id="600372">
    <property type="type" value="gene"/>
</dbReference>
<dbReference type="neXtProt" id="NX_Q8NHV4"/>
<dbReference type="OpenTargets" id="ENSG00000139350"/>
<dbReference type="PharmGKB" id="PA31531"/>
<dbReference type="VEuPathDB" id="HostDB:ENSG00000139350"/>
<dbReference type="eggNOG" id="KOG4378">
    <property type="taxonomic scope" value="Eukaryota"/>
</dbReference>
<dbReference type="GeneTree" id="ENSGT00390000001561"/>
<dbReference type="HOGENOM" id="CLU_415014_0_0_1"/>
<dbReference type="InParanoid" id="Q8NHV4"/>
<dbReference type="OMA" id="GTMVLWD"/>
<dbReference type="OrthoDB" id="1602884at2759"/>
<dbReference type="PAN-GO" id="Q8NHV4">
    <property type="GO annotations" value="7 GO annotations based on evolutionary models"/>
</dbReference>
<dbReference type="PhylomeDB" id="Q8NHV4"/>
<dbReference type="TreeFam" id="TF329816"/>
<dbReference type="PathwayCommons" id="Q8NHV4"/>
<dbReference type="Reactome" id="R-HSA-2565942">
    <property type="pathway name" value="Regulation of PLK1 Activity at G2/M Transition"/>
</dbReference>
<dbReference type="Reactome" id="R-HSA-380259">
    <property type="pathway name" value="Loss of Nlp from mitotic centrosomes"/>
</dbReference>
<dbReference type="Reactome" id="R-HSA-380270">
    <property type="pathway name" value="Recruitment of mitotic centrosome proteins and complexes"/>
</dbReference>
<dbReference type="Reactome" id="R-HSA-380284">
    <property type="pathway name" value="Loss of proteins required for interphase microtubule organization from the centrosome"/>
</dbReference>
<dbReference type="Reactome" id="R-HSA-380320">
    <property type="pathway name" value="Recruitment of NuMA to mitotic centrosomes"/>
</dbReference>
<dbReference type="Reactome" id="R-HSA-5620912">
    <property type="pathway name" value="Anchoring of the basal body to the plasma membrane"/>
</dbReference>
<dbReference type="Reactome" id="R-HSA-8854518">
    <property type="pathway name" value="AURKA Activation by TPX2"/>
</dbReference>
<dbReference type="SignaLink" id="Q8NHV4"/>
<dbReference type="SIGNOR" id="Q8NHV4"/>
<dbReference type="BioGRID-ORCS" id="121441">
    <property type="hits" value="800 hits in 1166 CRISPR screens"/>
</dbReference>
<dbReference type="CD-CODE" id="8C2F96ED">
    <property type="entry name" value="Centrosome"/>
</dbReference>
<dbReference type="ChiTaRS" id="NEDD1">
    <property type="organism name" value="human"/>
</dbReference>
<dbReference type="GeneWiki" id="NEDD1"/>
<dbReference type="GenomeRNAi" id="121441"/>
<dbReference type="Pharos" id="Q8NHV4">
    <property type="development level" value="Tbio"/>
</dbReference>
<dbReference type="PRO" id="PR:Q8NHV4"/>
<dbReference type="Proteomes" id="UP000005640">
    <property type="component" value="Chromosome 12"/>
</dbReference>
<dbReference type="RNAct" id="Q8NHV4">
    <property type="molecule type" value="protein"/>
</dbReference>
<dbReference type="Bgee" id="ENSG00000139350">
    <property type="expression patterns" value="Expressed in secondary oocyte and 180 other cell types or tissues"/>
</dbReference>
<dbReference type="ExpressionAtlas" id="Q8NHV4">
    <property type="expression patterns" value="baseline and differential"/>
</dbReference>
<dbReference type="GO" id="GO:0045177">
    <property type="term" value="C:apical part of cell"/>
    <property type="evidence" value="ECO:0007669"/>
    <property type="project" value="Ensembl"/>
</dbReference>
<dbReference type="GO" id="GO:0005814">
    <property type="term" value="C:centriole"/>
    <property type="evidence" value="ECO:0000318"/>
    <property type="project" value="GO_Central"/>
</dbReference>
<dbReference type="GO" id="GO:0005813">
    <property type="term" value="C:centrosome"/>
    <property type="evidence" value="ECO:0000314"/>
    <property type="project" value="HPA"/>
</dbReference>
<dbReference type="GO" id="GO:0036064">
    <property type="term" value="C:ciliary basal body"/>
    <property type="evidence" value="ECO:0000318"/>
    <property type="project" value="GO_Central"/>
</dbReference>
<dbReference type="GO" id="GO:0005737">
    <property type="term" value="C:cytoplasm"/>
    <property type="evidence" value="ECO:0000318"/>
    <property type="project" value="GO_Central"/>
</dbReference>
<dbReference type="GO" id="GO:0005829">
    <property type="term" value="C:cytosol"/>
    <property type="evidence" value="ECO:0000314"/>
    <property type="project" value="HPA"/>
</dbReference>
<dbReference type="GO" id="GO:0001650">
    <property type="term" value="C:fibrillar center"/>
    <property type="evidence" value="ECO:0000314"/>
    <property type="project" value="HPA"/>
</dbReference>
<dbReference type="GO" id="GO:0005654">
    <property type="term" value="C:nucleoplasm"/>
    <property type="evidence" value="ECO:0000314"/>
    <property type="project" value="HPA"/>
</dbReference>
<dbReference type="GO" id="GO:0000242">
    <property type="term" value="C:pericentriolar material"/>
    <property type="evidence" value="ECO:0007669"/>
    <property type="project" value="Ensembl"/>
</dbReference>
<dbReference type="GO" id="GO:0000922">
    <property type="term" value="C:spindle pole"/>
    <property type="evidence" value="ECO:0000318"/>
    <property type="project" value="GO_Central"/>
</dbReference>
<dbReference type="GO" id="GO:0043015">
    <property type="term" value="F:gamma-tubulin binding"/>
    <property type="evidence" value="ECO:0000318"/>
    <property type="project" value="GO_Central"/>
</dbReference>
<dbReference type="GO" id="GO:0051301">
    <property type="term" value="P:cell division"/>
    <property type="evidence" value="ECO:0007669"/>
    <property type="project" value="UniProtKB-KW"/>
</dbReference>
<dbReference type="GO" id="GO:0007020">
    <property type="term" value="P:microtubule nucleation"/>
    <property type="evidence" value="ECO:0000318"/>
    <property type="project" value="GO_Central"/>
</dbReference>
<dbReference type="GO" id="GO:0000278">
    <property type="term" value="P:mitotic cell cycle"/>
    <property type="evidence" value="ECO:0000318"/>
    <property type="project" value="GO_Central"/>
</dbReference>
<dbReference type="CDD" id="cd00200">
    <property type="entry name" value="WD40"/>
    <property type="match status" value="1"/>
</dbReference>
<dbReference type="FunFam" id="2.130.10.10:FF:000284">
    <property type="entry name" value="protein NEDD1 isoform X1"/>
    <property type="match status" value="1"/>
</dbReference>
<dbReference type="FunFam" id="2.130.10.10:FF:000302">
    <property type="entry name" value="protein NEDD1 isoform X2"/>
    <property type="match status" value="1"/>
</dbReference>
<dbReference type="Gene3D" id="2.130.10.10">
    <property type="entry name" value="YVTN repeat-like/Quinoprotein amine dehydrogenase"/>
    <property type="match status" value="3"/>
</dbReference>
<dbReference type="InterPro" id="IPR052818">
    <property type="entry name" value="NEDD1_Spindle_Assembly"/>
</dbReference>
<dbReference type="InterPro" id="IPR015943">
    <property type="entry name" value="WD40/YVTN_repeat-like_dom_sf"/>
</dbReference>
<dbReference type="InterPro" id="IPR019775">
    <property type="entry name" value="WD40_repeat_CS"/>
</dbReference>
<dbReference type="InterPro" id="IPR036322">
    <property type="entry name" value="WD40_repeat_dom_sf"/>
</dbReference>
<dbReference type="InterPro" id="IPR001680">
    <property type="entry name" value="WD40_rpt"/>
</dbReference>
<dbReference type="PANTHER" id="PTHR44414">
    <property type="entry name" value="PROTEIN NEDD1"/>
    <property type="match status" value="1"/>
</dbReference>
<dbReference type="PANTHER" id="PTHR44414:SF1">
    <property type="entry name" value="PROTEIN NEDD1"/>
    <property type="match status" value="1"/>
</dbReference>
<dbReference type="Pfam" id="PF00400">
    <property type="entry name" value="WD40"/>
    <property type="match status" value="4"/>
</dbReference>
<dbReference type="SMART" id="SM00320">
    <property type="entry name" value="WD40"/>
    <property type="match status" value="6"/>
</dbReference>
<dbReference type="SUPFAM" id="SSF50978">
    <property type="entry name" value="WD40 repeat-like"/>
    <property type="match status" value="1"/>
</dbReference>
<dbReference type="PROSITE" id="PS00678">
    <property type="entry name" value="WD_REPEATS_1"/>
    <property type="match status" value="2"/>
</dbReference>
<dbReference type="PROSITE" id="PS50082">
    <property type="entry name" value="WD_REPEATS_2"/>
    <property type="match status" value="1"/>
</dbReference>
<dbReference type="PROSITE" id="PS50294">
    <property type="entry name" value="WD_REPEATS_REGION"/>
    <property type="match status" value="1"/>
</dbReference>
<reference key="1">
    <citation type="journal article" date="2004" name="Nat. Genet.">
        <title>Complete sequencing and characterization of 21,243 full-length human cDNAs.</title>
        <authorList>
            <person name="Ota T."/>
            <person name="Suzuki Y."/>
            <person name="Nishikawa T."/>
            <person name="Otsuki T."/>
            <person name="Sugiyama T."/>
            <person name="Irie R."/>
            <person name="Wakamatsu A."/>
            <person name="Hayashi K."/>
            <person name="Sato H."/>
            <person name="Nagai K."/>
            <person name="Kimura K."/>
            <person name="Makita H."/>
            <person name="Sekine M."/>
            <person name="Obayashi M."/>
            <person name="Nishi T."/>
            <person name="Shibahara T."/>
            <person name="Tanaka T."/>
            <person name="Ishii S."/>
            <person name="Yamamoto J."/>
            <person name="Saito K."/>
            <person name="Kawai Y."/>
            <person name="Isono Y."/>
            <person name="Nakamura Y."/>
            <person name="Nagahari K."/>
            <person name="Murakami K."/>
            <person name="Yasuda T."/>
            <person name="Iwayanagi T."/>
            <person name="Wagatsuma M."/>
            <person name="Shiratori A."/>
            <person name="Sudo H."/>
            <person name="Hosoiri T."/>
            <person name="Kaku Y."/>
            <person name="Kodaira H."/>
            <person name="Kondo H."/>
            <person name="Sugawara M."/>
            <person name="Takahashi M."/>
            <person name="Kanda K."/>
            <person name="Yokoi T."/>
            <person name="Furuya T."/>
            <person name="Kikkawa E."/>
            <person name="Omura Y."/>
            <person name="Abe K."/>
            <person name="Kamihara K."/>
            <person name="Katsuta N."/>
            <person name="Sato K."/>
            <person name="Tanikawa M."/>
            <person name="Yamazaki M."/>
            <person name="Ninomiya K."/>
            <person name="Ishibashi T."/>
            <person name="Yamashita H."/>
            <person name="Murakawa K."/>
            <person name="Fujimori K."/>
            <person name="Tanai H."/>
            <person name="Kimata M."/>
            <person name="Watanabe M."/>
            <person name="Hiraoka S."/>
            <person name="Chiba Y."/>
            <person name="Ishida S."/>
            <person name="Ono Y."/>
            <person name="Takiguchi S."/>
            <person name="Watanabe S."/>
            <person name="Yosida M."/>
            <person name="Hotuta T."/>
            <person name="Kusano J."/>
            <person name="Kanehori K."/>
            <person name="Takahashi-Fujii A."/>
            <person name="Hara H."/>
            <person name="Tanase T.-O."/>
            <person name="Nomura Y."/>
            <person name="Togiya S."/>
            <person name="Komai F."/>
            <person name="Hara R."/>
            <person name="Takeuchi K."/>
            <person name="Arita M."/>
            <person name="Imose N."/>
            <person name="Musashino K."/>
            <person name="Yuuki H."/>
            <person name="Oshima A."/>
            <person name="Sasaki N."/>
            <person name="Aotsuka S."/>
            <person name="Yoshikawa Y."/>
            <person name="Matsunawa H."/>
            <person name="Ichihara T."/>
            <person name="Shiohata N."/>
            <person name="Sano S."/>
            <person name="Moriya S."/>
            <person name="Momiyama H."/>
            <person name="Satoh N."/>
            <person name="Takami S."/>
            <person name="Terashima Y."/>
            <person name="Suzuki O."/>
            <person name="Nakagawa S."/>
            <person name="Senoh A."/>
            <person name="Mizoguchi H."/>
            <person name="Goto Y."/>
            <person name="Shimizu F."/>
            <person name="Wakebe H."/>
            <person name="Hishigaki H."/>
            <person name="Watanabe T."/>
            <person name="Sugiyama A."/>
            <person name="Takemoto M."/>
            <person name="Kawakami B."/>
            <person name="Yamazaki M."/>
            <person name="Watanabe K."/>
            <person name="Kumagai A."/>
            <person name="Itakura S."/>
            <person name="Fukuzumi Y."/>
            <person name="Fujimori Y."/>
            <person name="Komiyama M."/>
            <person name="Tashiro H."/>
            <person name="Tanigami A."/>
            <person name="Fujiwara T."/>
            <person name="Ono T."/>
            <person name="Yamada K."/>
            <person name="Fujii Y."/>
            <person name="Ozaki K."/>
            <person name="Hirao M."/>
            <person name="Ohmori Y."/>
            <person name="Kawabata A."/>
            <person name="Hikiji T."/>
            <person name="Kobatake N."/>
            <person name="Inagaki H."/>
            <person name="Ikema Y."/>
            <person name="Okamoto S."/>
            <person name="Okitani R."/>
            <person name="Kawakami T."/>
            <person name="Noguchi S."/>
            <person name="Itoh T."/>
            <person name="Shigeta K."/>
            <person name="Senba T."/>
            <person name="Matsumura K."/>
            <person name="Nakajima Y."/>
            <person name="Mizuno T."/>
            <person name="Morinaga M."/>
            <person name="Sasaki M."/>
            <person name="Togashi T."/>
            <person name="Oyama M."/>
            <person name="Hata H."/>
            <person name="Watanabe M."/>
            <person name="Komatsu T."/>
            <person name="Mizushima-Sugano J."/>
            <person name="Satoh T."/>
            <person name="Shirai Y."/>
            <person name="Takahashi Y."/>
            <person name="Nakagawa K."/>
            <person name="Okumura K."/>
            <person name="Nagase T."/>
            <person name="Nomura N."/>
            <person name="Kikuchi H."/>
            <person name="Masuho Y."/>
            <person name="Yamashita R."/>
            <person name="Nakai K."/>
            <person name="Yada T."/>
            <person name="Nakamura Y."/>
            <person name="Ohara O."/>
            <person name="Isogai T."/>
            <person name="Sugano S."/>
        </authorList>
    </citation>
    <scope>NUCLEOTIDE SEQUENCE [LARGE SCALE MRNA] (ISOFORMS 1 AND 2)</scope>
    <source>
        <tissue>Testis</tissue>
        <tissue>Thymus</tissue>
        <tissue>Tongue</tissue>
    </source>
</reference>
<reference key="2">
    <citation type="journal article" date="2006" name="Nature">
        <title>The finished DNA sequence of human chromosome 12.</title>
        <authorList>
            <person name="Scherer S.E."/>
            <person name="Muzny D.M."/>
            <person name="Buhay C.J."/>
            <person name="Chen R."/>
            <person name="Cree A."/>
            <person name="Ding Y."/>
            <person name="Dugan-Rocha S."/>
            <person name="Gill R."/>
            <person name="Gunaratne P."/>
            <person name="Harris R.A."/>
            <person name="Hawes A.C."/>
            <person name="Hernandez J."/>
            <person name="Hodgson A.V."/>
            <person name="Hume J."/>
            <person name="Jackson A."/>
            <person name="Khan Z.M."/>
            <person name="Kovar-Smith C."/>
            <person name="Lewis L.R."/>
            <person name="Lozado R.J."/>
            <person name="Metzker M.L."/>
            <person name="Milosavljevic A."/>
            <person name="Miner G.R."/>
            <person name="Montgomery K.T."/>
            <person name="Morgan M.B."/>
            <person name="Nazareth L.V."/>
            <person name="Scott G."/>
            <person name="Sodergren E."/>
            <person name="Song X.-Z."/>
            <person name="Steffen D."/>
            <person name="Lovering R.C."/>
            <person name="Wheeler D.A."/>
            <person name="Worley K.C."/>
            <person name="Yuan Y."/>
            <person name="Zhang Z."/>
            <person name="Adams C.Q."/>
            <person name="Ansari-Lari M.A."/>
            <person name="Ayele M."/>
            <person name="Brown M.J."/>
            <person name="Chen G."/>
            <person name="Chen Z."/>
            <person name="Clerc-Blankenburg K.P."/>
            <person name="Davis C."/>
            <person name="Delgado O."/>
            <person name="Dinh H.H."/>
            <person name="Draper H."/>
            <person name="Gonzalez-Garay M.L."/>
            <person name="Havlak P."/>
            <person name="Jackson L.R."/>
            <person name="Jacob L.S."/>
            <person name="Kelly S.H."/>
            <person name="Li L."/>
            <person name="Li Z."/>
            <person name="Liu J."/>
            <person name="Liu W."/>
            <person name="Lu J."/>
            <person name="Maheshwari M."/>
            <person name="Nguyen B.-V."/>
            <person name="Okwuonu G.O."/>
            <person name="Pasternak S."/>
            <person name="Perez L.M."/>
            <person name="Plopper F.J.H."/>
            <person name="Santibanez J."/>
            <person name="Shen H."/>
            <person name="Tabor P.E."/>
            <person name="Verduzco D."/>
            <person name="Waldron L."/>
            <person name="Wang Q."/>
            <person name="Williams G.A."/>
            <person name="Zhang J."/>
            <person name="Zhou J."/>
            <person name="Allen C.C."/>
            <person name="Amin A.G."/>
            <person name="Anyalebechi V."/>
            <person name="Bailey M."/>
            <person name="Barbaria J.A."/>
            <person name="Bimage K.E."/>
            <person name="Bryant N.P."/>
            <person name="Burch P.E."/>
            <person name="Burkett C.E."/>
            <person name="Burrell K.L."/>
            <person name="Calderon E."/>
            <person name="Cardenas V."/>
            <person name="Carter K."/>
            <person name="Casias K."/>
            <person name="Cavazos I."/>
            <person name="Cavazos S.R."/>
            <person name="Ceasar H."/>
            <person name="Chacko J."/>
            <person name="Chan S.N."/>
            <person name="Chavez D."/>
            <person name="Christopoulos C."/>
            <person name="Chu J."/>
            <person name="Cockrell R."/>
            <person name="Cox C.D."/>
            <person name="Dang M."/>
            <person name="Dathorne S.R."/>
            <person name="David R."/>
            <person name="Davis C.M."/>
            <person name="Davy-Carroll L."/>
            <person name="Deshazo D.R."/>
            <person name="Donlin J.E."/>
            <person name="D'Souza L."/>
            <person name="Eaves K.A."/>
            <person name="Egan A."/>
            <person name="Emery-Cohen A.J."/>
            <person name="Escotto M."/>
            <person name="Flagg N."/>
            <person name="Forbes L.D."/>
            <person name="Gabisi A.M."/>
            <person name="Garza M."/>
            <person name="Hamilton C."/>
            <person name="Henderson N."/>
            <person name="Hernandez O."/>
            <person name="Hines S."/>
            <person name="Hogues M.E."/>
            <person name="Huang M."/>
            <person name="Idlebird D.G."/>
            <person name="Johnson R."/>
            <person name="Jolivet A."/>
            <person name="Jones S."/>
            <person name="Kagan R."/>
            <person name="King L.M."/>
            <person name="Leal B."/>
            <person name="Lebow H."/>
            <person name="Lee S."/>
            <person name="LeVan J.M."/>
            <person name="Lewis L.C."/>
            <person name="London P."/>
            <person name="Lorensuhewa L.M."/>
            <person name="Loulseged H."/>
            <person name="Lovett D.A."/>
            <person name="Lucier A."/>
            <person name="Lucier R.L."/>
            <person name="Ma J."/>
            <person name="Madu R.C."/>
            <person name="Mapua P."/>
            <person name="Martindale A.D."/>
            <person name="Martinez E."/>
            <person name="Massey E."/>
            <person name="Mawhiney S."/>
            <person name="Meador M.G."/>
            <person name="Mendez S."/>
            <person name="Mercado C."/>
            <person name="Mercado I.C."/>
            <person name="Merritt C.E."/>
            <person name="Miner Z.L."/>
            <person name="Minja E."/>
            <person name="Mitchell T."/>
            <person name="Mohabbat F."/>
            <person name="Mohabbat K."/>
            <person name="Montgomery B."/>
            <person name="Moore N."/>
            <person name="Morris S."/>
            <person name="Munidasa M."/>
            <person name="Ngo R.N."/>
            <person name="Nguyen N.B."/>
            <person name="Nickerson E."/>
            <person name="Nwaokelemeh O.O."/>
            <person name="Nwokenkwo S."/>
            <person name="Obregon M."/>
            <person name="Oguh M."/>
            <person name="Oragunye N."/>
            <person name="Oviedo R.J."/>
            <person name="Parish B.J."/>
            <person name="Parker D.N."/>
            <person name="Parrish J."/>
            <person name="Parks K.L."/>
            <person name="Paul H.A."/>
            <person name="Payton B.A."/>
            <person name="Perez A."/>
            <person name="Perrin W."/>
            <person name="Pickens A."/>
            <person name="Primus E.L."/>
            <person name="Pu L.-L."/>
            <person name="Puazo M."/>
            <person name="Quiles M.M."/>
            <person name="Quiroz J.B."/>
            <person name="Rabata D."/>
            <person name="Reeves K."/>
            <person name="Ruiz S.J."/>
            <person name="Shao H."/>
            <person name="Sisson I."/>
            <person name="Sonaike T."/>
            <person name="Sorelle R.P."/>
            <person name="Sutton A.E."/>
            <person name="Svatek A.F."/>
            <person name="Svetz L.A."/>
            <person name="Tamerisa K.S."/>
            <person name="Taylor T.R."/>
            <person name="Teague B."/>
            <person name="Thomas N."/>
            <person name="Thorn R.D."/>
            <person name="Trejos Z.Y."/>
            <person name="Trevino B.K."/>
            <person name="Ukegbu O.N."/>
            <person name="Urban J.B."/>
            <person name="Vasquez L.I."/>
            <person name="Vera V.A."/>
            <person name="Villasana D.M."/>
            <person name="Wang L."/>
            <person name="Ward-Moore S."/>
            <person name="Warren J.T."/>
            <person name="Wei X."/>
            <person name="White F."/>
            <person name="Williamson A.L."/>
            <person name="Wleczyk R."/>
            <person name="Wooden H.S."/>
            <person name="Wooden S.H."/>
            <person name="Yen J."/>
            <person name="Yoon L."/>
            <person name="Yoon V."/>
            <person name="Zorrilla S.E."/>
            <person name="Nelson D."/>
            <person name="Kucherlapati R."/>
            <person name="Weinstock G."/>
            <person name="Gibbs R.A."/>
        </authorList>
    </citation>
    <scope>NUCLEOTIDE SEQUENCE [LARGE SCALE GENOMIC DNA]</scope>
</reference>
<reference key="3">
    <citation type="submission" date="2005-07" db="EMBL/GenBank/DDBJ databases">
        <authorList>
            <person name="Mural R.J."/>
            <person name="Istrail S."/>
            <person name="Sutton G.G."/>
            <person name="Florea L."/>
            <person name="Halpern A.L."/>
            <person name="Mobarry C.M."/>
            <person name="Lippert R."/>
            <person name="Walenz B."/>
            <person name="Shatkay H."/>
            <person name="Dew I."/>
            <person name="Miller J.R."/>
            <person name="Flanigan M.J."/>
            <person name="Edwards N.J."/>
            <person name="Bolanos R."/>
            <person name="Fasulo D."/>
            <person name="Halldorsson B.V."/>
            <person name="Hannenhalli S."/>
            <person name="Turner R."/>
            <person name="Yooseph S."/>
            <person name="Lu F."/>
            <person name="Nusskern D.R."/>
            <person name="Shue B.C."/>
            <person name="Zheng X.H."/>
            <person name="Zhong F."/>
            <person name="Delcher A.L."/>
            <person name="Huson D.H."/>
            <person name="Kravitz S.A."/>
            <person name="Mouchard L."/>
            <person name="Reinert K."/>
            <person name="Remington K.A."/>
            <person name="Clark A.G."/>
            <person name="Waterman M.S."/>
            <person name="Eichler E.E."/>
            <person name="Adams M.D."/>
            <person name="Hunkapiller M.W."/>
            <person name="Myers E.W."/>
            <person name="Venter J.C."/>
        </authorList>
    </citation>
    <scope>NUCLEOTIDE SEQUENCE [LARGE SCALE GENOMIC DNA]</scope>
</reference>
<reference key="4">
    <citation type="journal article" date="2004" name="Genome Res.">
        <title>The status, quality, and expansion of the NIH full-length cDNA project: the Mammalian Gene Collection (MGC).</title>
        <authorList>
            <consortium name="The MGC Project Team"/>
        </authorList>
    </citation>
    <scope>NUCLEOTIDE SEQUENCE [LARGE SCALE MRNA] (ISOFORM 3)</scope>
    <source>
        <tissue>Testis</tissue>
    </source>
</reference>
<reference key="5">
    <citation type="journal article" date="2003" name="Nature">
        <title>Proteomic characterization of the human centrosome by protein correlation profiling.</title>
        <authorList>
            <person name="Andersen J.S."/>
            <person name="Wilkinson C.J."/>
            <person name="Mayor T."/>
            <person name="Mortensen P."/>
            <person name="Nigg E.A."/>
            <person name="Mann M."/>
        </authorList>
    </citation>
    <scope>IDENTIFICATION BY MASS SPECTROMETRY</scope>
    <scope>SUBCELLULAR LOCATION [LARGE SCALE ANALYSIS]</scope>
    <source>
        <tissue>Lymphoblast</tissue>
    </source>
</reference>
<reference key="6">
    <citation type="journal article" date="2008" name="J. Cell Biol.">
        <title>FAM29A promotes microtubule amplification via recruitment of the NEDD1-gamma-tubulin complex to the mitotic spindle.</title>
        <authorList>
            <person name="Zhu H."/>
            <person name="Coppinger J.A."/>
            <person name="Jang C.-Y."/>
            <person name="Yates J.R. III"/>
            <person name="Fang G."/>
        </authorList>
    </citation>
    <scope>INTERACTION WITH FAM29A</scope>
    <scope>SUBCELLULAR LOCATION</scope>
    <scope>FUNCTION</scope>
</reference>
<reference key="7">
    <citation type="journal article" date="2008" name="Mol. Cell">
        <title>Kinase-selective enrichment enables quantitative phosphoproteomics of the kinome across the cell cycle.</title>
        <authorList>
            <person name="Daub H."/>
            <person name="Olsen J.V."/>
            <person name="Bairlein M."/>
            <person name="Gnad F."/>
            <person name="Oppermann F.S."/>
            <person name="Korner R."/>
            <person name="Greff Z."/>
            <person name="Keri G."/>
            <person name="Stemmann O."/>
            <person name="Mann M."/>
        </authorList>
    </citation>
    <scope>PHOSPHORYLATION [LARGE SCALE ANALYSIS] AT SER-411</scope>
    <scope>IDENTIFICATION BY MASS SPECTROMETRY [LARGE SCALE ANALYSIS]</scope>
    <source>
        <tissue>Cervix carcinoma</tissue>
    </source>
</reference>
<reference key="8">
    <citation type="journal article" date="2008" name="Proc. Natl. Acad. Sci. U.S.A.">
        <title>A quantitative atlas of mitotic phosphorylation.</title>
        <authorList>
            <person name="Dephoure N."/>
            <person name="Zhou C."/>
            <person name="Villen J."/>
            <person name="Beausoleil S.A."/>
            <person name="Bakalarski C.E."/>
            <person name="Elledge S.J."/>
            <person name="Gygi S.P."/>
        </authorList>
    </citation>
    <scope>PHOSPHORYLATION [LARGE SCALE ANALYSIS] AT SER-516</scope>
    <scope>IDENTIFICATION BY MASS SPECTROMETRY [LARGE SCALE ANALYSIS]</scope>
    <source>
        <tissue>Cervix carcinoma</tissue>
    </source>
</reference>
<reference key="9">
    <citation type="journal article" date="2009" name="Anal. Chem.">
        <title>Lys-N and trypsin cover complementary parts of the phosphoproteome in a refined SCX-based approach.</title>
        <authorList>
            <person name="Gauci S."/>
            <person name="Helbig A.O."/>
            <person name="Slijper M."/>
            <person name="Krijgsveld J."/>
            <person name="Heck A.J."/>
            <person name="Mohammed S."/>
        </authorList>
    </citation>
    <scope>IDENTIFICATION BY MASS SPECTROMETRY [LARGE SCALE ANALYSIS]</scope>
</reference>
<reference key="10">
    <citation type="journal article" date="2009" name="J. Cell Sci.">
        <title>Sequential phosphorylation of Nedd1 by Cdk1 and Plk1 is required for targeting of the gammaTuRC to the centrosome.</title>
        <authorList>
            <person name="Zhang X."/>
            <person name="Chen Q."/>
            <person name="Feng J."/>
            <person name="Hou J."/>
            <person name="Yang F."/>
            <person name="Liu J."/>
            <person name="Jiang Q."/>
            <person name="Zhang C."/>
        </authorList>
    </citation>
    <scope>FUNCTION</scope>
    <scope>PHOSPHORYLATION AT THR-550 BY CDK1</scope>
    <scope>PHOSPHORYLATION AT THR-382; SER-397; SER-426 AND SER-637 BY PLK1</scope>
</reference>
<reference key="11">
    <citation type="journal article" date="2009" name="Sci. Signal.">
        <title>Quantitative phosphoproteomic analysis of T cell receptor signaling reveals system-wide modulation of protein-protein interactions.</title>
        <authorList>
            <person name="Mayya V."/>
            <person name="Lundgren D.H."/>
            <person name="Hwang S.-I."/>
            <person name="Rezaul K."/>
            <person name="Wu L."/>
            <person name="Eng J.K."/>
            <person name="Rodionov V."/>
            <person name="Han D.K."/>
        </authorList>
    </citation>
    <scope>PHOSPHORYLATION [LARGE SCALE ANALYSIS] AT SER-516</scope>
    <scope>IDENTIFICATION BY MASS SPECTROMETRY [LARGE SCALE ANALYSIS]</scope>
    <source>
        <tissue>Leukemic T-cell</tissue>
    </source>
</reference>
<reference key="12">
    <citation type="journal article" date="2010" name="Sci. Signal.">
        <title>Quantitative phosphoproteomics reveals widespread full phosphorylation site occupancy during mitosis.</title>
        <authorList>
            <person name="Olsen J.V."/>
            <person name="Vermeulen M."/>
            <person name="Santamaria A."/>
            <person name="Kumar C."/>
            <person name="Miller M.L."/>
            <person name="Jensen L.J."/>
            <person name="Gnad F."/>
            <person name="Cox J."/>
            <person name="Jensen T.S."/>
            <person name="Nigg E.A."/>
            <person name="Brunak S."/>
            <person name="Mann M."/>
        </authorList>
    </citation>
    <scope>IDENTIFICATION BY MASS SPECTROMETRY [LARGE SCALE ANALYSIS]</scope>
    <source>
        <tissue>Cervix carcinoma</tissue>
    </source>
</reference>
<reference key="13">
    <citation type="journal article" date="2013" name="J. Proteome Res.">
        <title>Toward a comprehensive characterization of a human cancer cell phosphoproteome.</title>
        <authorList>
            <person name="Zhou H."/>
            <person name="Di Palma S."/>
            <person name="Preisinger C."/>
            <person name="Peng M."/>
            <person name="Polat A.N."/>
            <person name="Heck A.J."/>
            <person name="Mohammed S."/>
        </authorList>
    </citation>
    <scope>PHOSPHORYLATION [LARGE SCALE ANALYSIS] AT SER-325; SER-397; SER-411; SER-468 AND SER-516</scope>
    <scope>IDENTIFICATION BY MASS SPECTROMETRY [LARGE SCALE ANALYSIS]</scope>
    <source>
        <tissue>Cervix carcinoma</tissue>
        <tissue>Erythroleukemia</tissue>
    </source>
</reference>
<reference key="14">
    <citation type="journal article" date="2016" name="Cell. Mol. Life Sci.">
        <title>HSP70 regulates the function of mitotic centrosomes.</title>
        <authorList>
            <person name="Fang C.T."/>
            <person name="Kuo H.H."/>
            <person name="Pan T.S."/>
            <person name="Yu F.C."/>
            <person name="Yih L.H."/>
        </authorList>
    </citation>
    <scope>INTERACTION WITH HSPA1A; HSPA1B AND GAMMA-TUBULIN</scope>
    <scope>SUBCELLULAR LOCATION</scope>
</reference>
<keyword id="KW-0025">Alternative splicing</keyword>
<keyword id="KW-0131">Cell cycle</keyword>
<keyword id="KW-0132">Cell division</keyword>
<keyword id="KW-0963">Cytoplasm</keyword>
<keyword id="KW-0206">Cytoskeleton</keyword>
<keyword id="KW-0498">Mitosis</keyword>
<keyword id="KW-0597">Phosphoprotein</keyword>
<keyword id="KW-1267">Proteomics identification</keyword>
<keyword id="KW-1185">Reference proteome</keyword>
<keyword id="KW-0677">Repeat</keyword>
<keyword id="KW-0853">WD repeat</keyword>
<sequence length="660" mass="71966">MQENLRFASSGDDIKIWDASSMTLVDKFNPHTSPHGISSICWSSNNNFLVTASSSGDKIVVSSCKCKPVPLLELAEGQKQTCVNLNSTSMYLVSGGLNNTVNIWDLKSKRVHRSLKDHKDQVTCVTYNWNDCYIASGSLSGEIILHSVTTNLSSTPFGHGSNQSVRHLKYSLFKKSLLGSVSDNGIVTLWDVNSQSPYHNFDSVHKAPASGICFSPVNELLFVTIGLDKRIILYDTSSKKLVKTLVADTPLTAVDFMPDGATLAIGSSRGKIYQYDLRMLKSPVKTISAHKTSVQCIAFQYSTVLTKSSLNKGCSNKPTTVNKRSVNVNAASGGVQNSGIVREAPATSIATVLPQPMTSAMGKGTVAVQEKAGLPRSINTDTLSKETDSGKNQDFSSFDDTGKSSLGDMFSPIRDDAVVNKGSDESIGKGDGFDFLPQLNSVFPPRKNPVTSSTSVLHSSPLNVFMGSPGKEENENRDLTAESKKIYMGKQESKDSFKQLAKLVTSGAESGNLNTSPSSNQTRNSEKFEKPENEIEAQLICEPPINGSSTPNPKIASSVTAGVASSLSEKIADSIGNNRQNAPLTSIQIRFIQNMIQETLDDFREACHRDIVNLQVEMIKQFHMQLNEMHSLLERYSVNEGLVAEIERLREENKRLRAHF</sequence>
<proteinExistence type="evidence at protein level"/>
<accession>Q8NHV4</accession>
<accession>B0AZN0</accession>
<accession>B4E145</accession>
<accession>G3V3F1</accession>
<accession>Q8NA30</accession>
<organism>
    <name type="scientific">Homo sapiens</name>
    <name type="common">Human</name>
    <dbReference type="NCBI Taxonomy" id="9606"/>
    <lineage>
        <taxon>Eukaryota</taxon>
        <taxon>Metazoa</taxon>
        <taxon>Chordata</taxon>
        <taxon>Craniata</taxon>
        <taxon>Vertebrata</taxon>
        <taxon>Euteleostomi</taxon>
        <taxon>Mammalia</taxon>
        <taxon>Eutheria</taxon>
        <taxon>Euarchontoglires</taxon>
        <taxon>Primates</taxon>
        <taxon>Haplorrhini</taxon>
        <taxon>Catarrhini</taxon>
        <taxon>Hominidae</taxon>
        <taxon>Homo</taxon>
    </lineage>
</organism>
<gene>
    <name type="primary">NEDD1</name>
</gene>
<name>NEDD1_HUMAN</name>
<comment type="function">
    <text evidence="3 4">Required for mitosis progression. Promotes the nucleation of microtubules from the spindle.</text>
</comment>
<comment type="subunit">
    <text evidence="3 5">Interacts with FAM29A (PubMed:19029337). Interacts with HSPA1A and HSPA1B. Interacts with gamma-tubulin in a HSPA1A/B-dependent manner (PubMed:27137183).</text>
</comment>
<comment type="interaction">
    <interactant intactId="EBI-2555055">
        <id>Q8NHV4</id>
    </interactant>
    <interactant intactId="EBI-2558196">
        <id>Q7Z4H7</id>
        <label>HAUS6</label>
    </interactant>
    <organismsDiffer>false</organismsDiffer>
    <experiments>2</experiments>
</comment>
<comment type="subcellular location">
    <subcellularLocation>
        <location evidence="2 3 5">Cytoplasm</location>
        <location evidence="2 3 5">Cytoskeleton</location>
        <location evidence="2 3 5">Microtubule organizing center</location>
        <location evidence="2 3 5">Centrosome</location>
    </subcellularLocation>
</comment>
<comment type="alternative products">
    <event type="alternative splicing"/>
    <isoform>
        <id>Q8NHV4-1</id>
        <name>1</name>
        <sequence type="displayed"/>
    </isoform>
    <isoform>
        <id>Q8NHV4-2</id>
        <name>2</name>
        <sequence type="described" ref="VSP_043411"/>
    </isoform>
    <isoform>
        <id>Q8NHV4-3</id>
        <name>3</name>
        <sequence type="described" ref="VSP_053794"/>
    </isoform>
</comment>
<comment type="PTM">
    <text evidence="4">During mitosis, prior phosphorylation on Thr-550 by CDK1 promotes subsequent phosphorylation by PLK1 on Thr-382, Ser-397, Ser-426 and Ser-637. Phosphorylated NEDD1 can interact with gamma-tubulin for targeting the gamma-tubulin ring complex (gTuRC) to the centrosome, an important step for spindle formation.</text>
</comment>
<comment type="sequence caution" evidence="8">
    <conflict type="erroneous initiation">
        <sequence resource="EMBL-CDS" id="AAH27605"/>
    </conflict>
    <text>Truncated N-terminus.</text>
</comment>
<protein>
    <recommendedName>
        <fullName>Protein NEDD1</fullName>
    </recommendedName>
    <alternativeName>
        <fullName>Neural precursor cell expressed developmentally down-regulated protein 1</fullName>
        <shortName>NEDD-1</shortName>
    </alternativeName>
</protein>
<evidence type="ECO:0000256" key="1">
    <source>
        <dbReference type="SAM" id="MobiDB-lite"/>
    </source>
</evidence>
<evidence type="ECO:0000269" key="2">
    <source>
    </source>
</evidence>
<evidence type="ECO:0000269" key="3">
    <source>
    </source>
</evidence>
<evidence type="ECO:0000269" key="4">
    <source>
    </source>
</evidence>
<evidence type="ECO:0000269" key="5">
    <source>
    </source>
</evidence>
<evidence type="ECO:0000303" key="6">
    <source>
    </source>
</evidence>
<evidence type="ECO:0000303" key="7">
    <source>
    </source>
</evidence>
<evidence type="ECO:0000305" key="8"/>
<evidence type="ECO:0007744" key="9">
    <source>
    </source>
</evidence>
<evidence type="ECO:0007744" key="10">
    <source>
    </source>
</evidence>
<evidence type="ECO:0007744" key="11">
    <source>
    </source>
</evidence>
<evidence type="ECO:0007744" key="12">
    <source>
    </source>
</evidence>
<feature type="chain" id="PRO_0000051095" description="Protein NEDD1">
    <location>
        <begin position="1"/>
        <end position="660"/>
    </location>
</feature>
<feature type="repeat" description="WD 1">
    <location>
        <begin position="1"/>
        <end position="31"/>
    </location>
</feature>
<feature type="repeat" description="WD 2">
    <location>
        <begin position="32"/>
        <end position="71"/>
    </location>
</feature>
<feature type="repeat" description="WD 3">
    <location>
        <begin position="75"/>
        <end position="114"/>
    </location>
</feature>
<feature type="repeat" description="WD 4">
    <location>
        <begin position="117"/>
        <end position="156"/>
    </location>
</feature>
<feature type="repeat" description="WD 5">
    <location>
        <begin position="160"/>
        <end position="200"/>
    </location>
</feature>
<feature type="repeat" description="WD 6">
    <location>
        <begin position="204"/>
        <end position="244"/>
    </location>
</feature>
<feature type="repeat" description="WD 7">
    <location>
        <begin position="246"/>
        <end position="285"/>
    </location>
</feature>
<feature type="repeat" description="WD 8">
    <location>
        <begin position="289"/>
        <end position="332"/>
    </location>
</feature>
<feature type="region of interest" description="Disordered" evidence="1">
    <location>
        <begin position="369"/>
        <end position="411"/>
    </location>
</feature>
<feature type="region of interest" description="Disordered" evidence="1">
    <location>
        <begin position="507"/>
        <end position="532"/>
    </location>
</feature>
<feature type="compositionally biased region" description="Polar residues" evidence="1">
    <location>
        <begin position="507"/>
        <end position="523"/>
    </location>
</feature>
<feature type="modified residue" description="Phosphoserine" evidence="12">
    <location>
        <position position="325"/>
    </location>
</feature>
<feature type="modified residue" description="Phosphothreonine; by PLK1" evidence="4">
    <location>
        <position position="382"/>
    </location>
</feature>
<feature type="modified residue" description="Phosphoserine; by PLK1" evidence="4 12">
    <location>
        <position position="397"/>
    </location>
</feature>
<feature type="modified residue" description="Phosphoserine" evidence="10 12">
    <location>
        <position position="411"/>
    </location>
</feature>
<feature type="modified residue" description="Phosphoserine; by PLK1" evidence="4">
    <location>
        <position position="426"/>
    </location>
</feature>
<feature type="modified residue" description="Phosphoserine" evidence="12">
    <location>
        <position position="468"/>
    </location>
</feature>
<feature type="modified residue" description="Phosphoserine" evidence="9 11 12">
    <location>
        <position position="516"/>
    </location>
</feature>
<feature type="modified residue" description="Phosphothreonine; by CDK1" evidence="4">
    <location>
        <position position="550"/>
    </location>
</feature>
<feature type="modified residue" description="Phosphoserine; by PLK1" evidence="4">
    <location>
        <position position="637"/>
    </location>
</feature>
<feature type="splice variant" id="VSP_043411" description="In isoform 2." evidence="6">
    <location>
        <begin position="1"/>
        <end position="89"/>
    </location>
</feature>
<feature type="splice variant" id="VSP_053794" description="In isoform 3." evidence="7">
    <original>M</original>
    <variation>MHFTGAVM</variation>
    <location>
        <position position="1"/>
    </location>
</feature>
<feature type="sequence conflict" description="In Ref. 1; BAC04099." evidence="8" ref="1">
    <original>Y</original>
    <variation>C</variation>
    <location>
        <position position="170"/>
    </location>
</feature>
<feature type="sequence conflict" description="In Ref. 1; BAC04099." evidence="8" ref="1">
    <original>M</original>
    <variation>V</variation>
    <location>
        <position position="409"/>
    </location>
</feature>
<feature type="sequence conflict" description="In Ref. 1; BAC04099." evidence="8" ref="1">
    <original>L</original>
    <variation>P</variation>
    <location>
        <position position="649"/>
    </location>
</feature>